<feature type="chain" id="PRO_0000350126" description="Probable dual-specificity RNA methyltransferase RlmN">
    <location>
        <begin position="1"/>
        <end position="347"/>
    </location>
</feature>
<feature type="domain" description="Radical SAM core" evidence="2">
    <location>
        <begin position="97"/>
        <end position="327"/>
    </location>
</feature>
<feature type="active site" description="Proton acceptor" evidence="1">
    <location>
        <position position="91"/>
    </location>
</feature>
<feature type="active site" description="S-methylcysteine intermediate" evidence="1">
    <location>
        <position position="332"/>
    </location>
</feature>
<feature type="binding site" evidence="1">
    <location>
        <position position="111"/>
    </location>
    <ligand>
        <name>[4Fe-4S] cluster</name>
        <dbReference type="ChEBI" id="CHEBI:49883"/>
        <note>4Fe-4S-S-AdoMet</note>
    </ligand>
</feature>
<feature type="binding site" evidence="1">
    <location>
        <position position="115"/>
    </location>
    <ligand>
        <name>[4Fe-4S] cluster</name>
        <dbReference type="ChEBI" id="CHEBI:49883"/>
        <note>4Fe-4S-S-AdoMet</note>
    </ligand>
</feature>
<feature type="binding site" evidence="1">
    <location>
        <position position="118"/>
    </location>
    <ligand>
        <name>[4Fe-4S] cluster</name>
        <dbReference type="ChEBI" id="CHEBI:49883"/>
        <note>4Fe-4S-S-AdoMet</note>
    </ligand>
</feature>
<feature type="binding site" evidence="1">
    <location>
        <begin position="158"/>
        <end position="159"/>
    </location>
    <ligand>
        <name>S-adenosyl-L-methionine</name>
        <dbReference type="ChEBI" id="CHEBI:59789"/>
    </ligand>
</feature>
<feature type="binding site" evidence="1">
    <location>
        <position position="190"/>
    </location>
    <ligand>
        <name>S-adenosyl-L-methionine</name>
        <dbReference type="ChEBI" id="CHEBI:59789"/>
    </ligand>
</feature>
<feature type="binding site" evidence="1">
    <location>
        <begin position="213"/>
        <end position="215"/>
    </location>
    <ligand>
        <name>S-adenosyl-L-methionine</name>
        <dbReference type="ChEBI" id="CHEBI:59789"/>
    </ligand>
</feature>
<feature type="binding site" evidence="1">
    <location>
        <position position="289"/>
    </location>
    <ligand>
        <name>S-adenosyl-L-methionine</name>
        <dbReference type="ChEBI" id="CHEBI:59789"/>
    </ligand>
</feature>
<feature type="disulfide bond" description="(transient)" evidence="1">
    <location>
        <begin position="104"/>
        <end position="332"/>
    </location>
</feature>
<accession>Q8XJL6</accession>
<dbReference type="EC" id="2.1.1.192" evidence="1"/>
<dbReference type="EMBL" id="BA000016">
    <property type="protein sequence ID" value="BAB81446.1"/>
    <property type="molecule type" value="Genomic_DNA"/>
</dbReference>
<dbReference type="RefSeq" id="WP_003458521.1">
    <property type="nucleotide sequence ID" value="NC_003366.1"/>
</dbReference>
<dbReference type="SMR" id="Q8XJL6"/>
<dbReference type="STRING" id="195102.gene:10491004"/>
<dbReference type="GeneID" id="93001723"/>
<dbReference type="KEGG" id="cpe:CPE1740"/>
<dbReference type="HOGENOM" id="CLU_029101_2_0_9"/>
<dbReference type="Proteomes" id="UP000000818">
    <property type="component" value="Chromosome"/>
</dbReference>
<dbReference type="GO" id="GO:0005737">
    <property type="term" value="C:cytoplasm"/>
    <property type="evidence" value="ECO:0007669"/>
    <property type="project" value="UniProtKB-SubCell"/>
</dbReference>
<dbReference type="GO" id="GO:0051539">
    <property type="term" value="F:4 iron, 4 sulfur cluster binding"/>
    <property type="evidence" value="ECO:0007669"/>
    <property type="project" value="UniProtKB-UniRule"/>
</dbReference>
<dbReference type="GO" id="GO:0046872">
    <property type="term" value="F:metal ion binding"/>
    <property type="evidence" value="ECO:0007669"/>
    <property type="project" value="UniProtKB-KW"/>
</dbReference>
<dbReference type="GO" id="GO:0070040">
    <property type="term" value="F:rRNA (adenine(2503)-C2-)-methyltransferase activity"/>
    <property type="evidence" value="ECO:0007669"/>
    <property type="project" value="UniProtKB-UniRule"/>
</dbReference>
<dbReference type="GO" id="GO:0019843">
    <property type="term" value="F:rRNA binding"/>
    <property type="evidence" value="ECO:0007669"/>
    <property type="project" value="UniProtKB-UniRule"/>
</dbReference>
<dbReference type="GO" id="GO:0002935">
    <property type="term" value="F:tRNA (adenine(37)-C2)-methyltransferase activity"/>
    <property type="evidence" value="ECO:0007669"/>
    <property type="project" value="UniProtKB-UniRule"/>
</dbReference>
<dbReference type="GO" id="GO:0000049">
    <property type="term" value="F:tRNA binding"/>
    <property type="evidence" value="ECO:0007669"/>
    <property type="project" value="UniProtKB-UniRule"/>
</dbReference>
<dbReference type="GO" id="GO:0070475">
    <property type="term" value="P:rRNA base methylation"/>
    <property type="evidence" value="ECO:0007669"/>
    <property type="project" value="UniProtKB-UniRule"/>
</dbReference>
<dbReference type="GO" id="GO:0030488">
    <property type="term" value="P:tRNA methylation"/>
    <property type="evidence" value="ECO:0007669"/>
    <property type="project" value="UniProtKB-UniRule"/>
</dbReference>
<dbReference type="CDD" id="cd01335">
    <property type="entry name" value="Radical_SAM"/>
    <property type="match status" value="1"/>
</dbReference>
<dbReference type="FunFam" id="3.20.20.70:FF:000014">
    <property type="entry name" value="Probable dual-specificity RNA methyltransferase RlmN"/>
    <property type="match status" value="1"/>
</dbReference>
<dbReference type="Gene3D" id="1.10.150.530">
    <property type="match status" value="1"/>
</dbReference>
<dbReference type="Gene3D" id="3.20.20.70">
    <property type="entry name" value="Aldolase class I"/>
    <property type="match status" value="1"/>
</dbReference>
<dbReference type="HAMAP" id="MF_01849">
    <property type="entry name" value="RNA_methyltr_RlmN"/>
    <property type="match status" value="1"/>
</dbReference>
<dbReference type="InterPro" id="IPR013785">
    <property type="entry name" value="Aldolase_TIM"/>
</dbReference>
<dbReference type="InterPro" id="IPR006638">
    <property type="entry name" value="Elp3/MiaA/NifB-like_rSAM"/>
</dbReference>
<dbReference type="InterPro" id="IPR040072">
    <property type="entry name" value="Methyltransferase_A"/>
</dbReference>
<dbReference type="InterPro" id="IPR048641">
    <property type="entry name" value="RlmN_N"/>
</dbReference>
<dbReference type="InterPro" id="IPR027492">
    <property type="entry name" value="RNA_MTrfase_RlmN"/>
</dbReference>
<dbReference type="InterPro" id="IPR004383">
    <property type="entry name" value="rRNA_lsu_MTrfase_RlmN/Cfr"/>
</dbReference>
<dbReference type="InterPro" id="IPR007197">
    <property type="entry name" value="rSAM"/>
</dbReference>
<dbReference type="NCBIfam" id="TIGR00048">
    <property type="entry name" value="rRNA_mod_RlmN"/>
    <property type="match status" value="1"/>
</dbReference>
<dbReference type="PANTHER" id="PTHR30544">
    <property type="entry name" value="23S RRNA METHYLTRANSFERASE"/>
    <property type="match status" value="1"/>
</dbReference>
<dbReference type="PANTHER" id="PTHR30544:SF5">
    <property type="entry name" value="RADICAL SAM CORE DOMAIN-CONTAINING PROTEIN"/>
    <property type="match status" value="1"/>
</dbReference>
<dbReference type="Pfam" id="PF04055">
    <property type="entry name" value="Radical_SAM"/>
    <property type="match status" value="1"/>
</dbReference>
<dbReference type="Pfam" id="PF21016">
    <property type="entry name" value="RlmN_N"/>
    <property type="match status" value="1"/>
</dbReference>
<dbReference type="PIRSF" id="PIRSF006004">
    <property type="entry name" value="CHP00048"/>
    <property type="match status" value="1"/>
</dbReference>
<dbReference type="SFLD" id="SFLDF00275">
    <property type="entry name" value="adenosine_C2_methyltransferase"/>
    <property type="match status" value="1"/>
</dbReference>
<dbReference type="SFLD" id="SFLDG01062">
    <property type="entry name" value="methyltransferase_(Class_A)"/>
    <property type="match status" value="1"/>
</dbReference>
<dbReference type="SMART" id="SM00729">
    <property type="entry name" value="Elp3"/>
    <property type="match status" value="1"/>
</dbReference>
<dbReference type="SUPFAM" id="SSF102114">
    <property type="entry name" value="Radical SAM enzymes"/>
    <property type="match status" value="1"/>
</dbReference>
<dbReference type="PROSITE" id="PS51918">
    <property type="entry name" value="RADICAL_SAM"/>
    <property type="match status" value="1"/>
</dbReference>
<comment type="function">
    <text evidence="1">Specifically methylates position 2 of adenine 2503 in 23S rRNA and position 2 of adenine 37 in tRNAs.</text>
</comment>
<comment type="catalytic activity">
    <reaction evidence="1">
        <text>adenosine(2503) in 23S rRNA + 2 reduced [2Fe-2S]-[ferredoxin] + 2 S-adenosyl-L-methionine = 2-methyladenosine(2503) in 23S rRNA + 5'-deoxyadenosine + L-methionine + 2 oxidized [2Fe-2S]-[ferredoxin] + S-adenosyl-L-homocysteine</text>
        <dbReference type="Rhea" id="RHEA:42916"/>
        <dbReference type="Rhea" id="RHEA-COMP:10000"/>
        <dbReference type="Rhea" id="RHEA-COMP:10001"/>
        <dbReference type="Rhea" id="RHEA-COMP:10152"/>
        <dbReference type="Rhea" id="RHEA-COMP:10282"/>
        <dbReference type="ChEBI" id="CHEBI:17319"/>
        <dbReference type="ChEBI" id="CHEBI:33737"/>
        <dbReference type="ChEBI" id="CHEBI:33738"/>
        <dbReference type="ChEBI" id="CHEBI:57844"/>
        <dbReference type="ChEBI" id="CHEBI:57856"/>
        <dbReference type="ChEBI" id="CHEBI:59789"/>
        <dbReference type="ChEBI" id="CHEBI:74411"/>
        <dbReference type="ChEBI" id="CHEBI:74497"/>
        <dbReference type="EC" id="2.1.1.192"/>
    </reaction>
</comment>
<comment type="catalytic activity">
    <reaction evidence="1">
        <text>adenosine(37) in tRNA + 2 reduced [2Fe-2S]-[ferredoxin] + 2 S-adenosyl-L-methionine = 2-methyladenosine(37) in tRNA + 5'-deoxyadenosine + L-methionine + 2 oxidized [2Fe-2S]-[ferredoxin] + S-adenosyl-L-homocysteine</text>
        <dbReference type="Rhea" id="RHEA:43332"/>
        <dbReference type="Rhea" id="RHEA-COMP:10000"/>
        <dbReference type="Rhea" id="RHEA-COMP:10001"/>
        <dbReference type="Rhea" id="RHEA-COMP:10162"/>
        <dbReference type="Rhea" id="RHEA-COMP:10485"/>
        <dbReference type="ChEBI" id="CHEBI:17319"/>
        <dbReference type="ChEBI" id="CHEBI:33737"/>
        <dbReference type="ChEBI" id="CHEBI:33738"/>
        <dbReference type="ChEBI" id="CHEBI:57844"/>
        <dbReference type="ChEBI" id="CHEBI:57856"/>
        <dbReference type="ChEBI" id="CHEBI:59789"/>
        <dbReference type="ChEBI" id="CHEBI:74411"/>
        <dbReference type="ChEBI" id="CHEBI:74497"/>
        <dbReference type="EC" id="2.1.1.192"/>
    </reaction>
</comment>
<comment type="cofactor">
    <cofactor evidence="1">
        <name>[4Fe-4S] cluster</name>
        <dbReference type="ChEBI" id="CHEBI:49883"/>
    </cofactor>
    <text evidence="1">Binds 1 [4Fe-4S] cluster. The cluster is coordinated with 3 cysteines and an exchangeable S-adenosyl-L-methionine.</text>
</comment>
<comment type="subcellular location">
    <subcellularLocation>
        <location evidence="1">Cytoplasm</location>
    </subcellularLocation>
</comment>
<comment type="miscellaneous">
    <text evidence="1">Reaction proceeds by a ping-pong mechanism involving intermediate methylation of a conserved cysteine residue.</text>
</comment>
<comment type="similarity">
    <text evidence="1">Belongs to the radical SAM superfamily. RlmN family.</text>
</comment>
<reference key="1">
    <citation type="journal article" date="2002" name="Proc. Natl. Acad. Sci. U.S.A.">
        <title>Complete genome sequence of Clostridium perfringens, an anaerobic flesh-eater.</title>
        <authorList>
            <person name="Shimizu T."/>
            <person name="Ohtani K."/>
            <person name="Hirakawa H."/>
            <person name="Ohshima K."/>
            <person name="Yamashita A."/>
            <person name="Shiba T."/>
            <person name="Ogasawara N."/>
            <person name="Hattori M."/>
            <person name="Kuhara S."/>
            <person name="Hayashi H."/>
        </authorList>
    </citation>
    <scope>NUCLEOTIDE SEQUENCE [LARGE SCALE GENOMIC DNA]</scope>
    <source>
        <strain>13 / Type A</strain>
    </source>
</reference>
<protein>
    <recommendedName>
        <fullName evidence="1">Probable dual-specificity RNA methyltransferase RlmN</fullName>
        <ecNumber evidence="1">2.1.1.192</ecNumber>
    </recommendedName>
    <alternativeName>
        <fullName evidence="1">23S rRNA (adenine(2503)-C(2))-methyltransferase</fullName>
    </alternativeName>
    <alternativeName>
        <fullName evidence="1">23S rRNA m2A2503 methyltransferase</fullName>
    </alternativeName>
    <alternativeName>
        <fullName evidence="1">Ribosomal RNA large subunit methyltransferase N</fullName>
    </alternativeName>
    <alternativeName>
        <fullName evidence="1">tRNA (adenine(37)-C(2))-methyltransferase</fullName>
    </alternativeName>
    <alternativeName>
        <fullName evidence="1">tRNA m2A37 methyltransferase</fullName>
    </alternativeName>
</protein>
<keyword id="KW-0004">4Fe-4S</keyword>
<keyword id="KW-0963">Cytoplasm</keyword>
<keyword id="KW-1015">Disulfide bond</keyword>
<keyword id="KW-0408">Iron</keyword>
<keyword id="KW-0411">Iron-sulfur</keyword>
<keyword id="KW-0479">Metal-binding</keyword>
<keyword id="KW-0489">Methyltransferase</keyword>
<keyword id="KW-1185">Reference proteome</keyword>
<keyword id="KW-0698">rRNA processing</keyword>
<keyword id="KW-0949">S-adenosyl-L-methionine</keyword>
<keyword id="KW-0808">Transferase</keyword>
<keyword id="KW-0819">tRNA processing</keyword>
<organism>
    <name type="scientific">Clostridium perfringens (strain 13 / Type A)</name>
    <dbReference type="NCBI Taxonomy" id="195102"/>
    <lineage>
        <taxon>Bacteria</taxon>
        <taxon>Bacillati</taxon>
        <taxon>Bacillota</taxon>
        <taxon>Clostridia</taxon>
        <taxon>Eubacteriales</taxon>
        <taxon>Clostridiaceae</taxon>
        <taxon>Clostridium</taxon>
    </lineage>
</organism>
<sequence>MKNILDFTLEELKEWMKENGESAFRAKQIFDWIYKKEVFNFEEMKNISKALIGKLSENFYIGIPEVIDYLSSSEDGTRKILLGLGDGNIIECVIMRYKYGNSICVSTQIGCRMGCKFCASTLEGMVRNLTAGEILSEVLIGQKLLGERISNIVLMGSGEPLDNYDNVMKFLELVNADYGLNIGQRHITLSTCGLVPKIREMADKEMQVTLAISLHAVSDEKRKTIMPIANKYSISEILDACNYYIEKTGRRITFEYSLVSGVNDTKEDAKSLGRLLKGMLCHVNLIPVNEIKENEFKKSTKKDIETFLNTLKTYGVEATVRREMGSDINAACGQLRRSYIKSKGLKL</sequence>
<gene>
    <name evidence="1" type="primary">rlmN</name>
    <name type="ordered locus">CPE1740</name>
</gene>
<evidence type="ECO:0000255" key="1">
    <source>
        <dbReference type="HAMAP-Rule" id="MF_01849"/>
    </source>
</evidence>
<evidence type="ECO:0000255" key="2">
    <source>
        <dbReference type="PROSITE-ProRule" id="PRU01266"/>
    </source>
</evidence>
<proteinExistence type="inferred from homology"/>
<name>RLMN_CLOPE</name>